<evidence type="ECO:0000255" key="1"/>
<evidence type="ECO:0000269" key="2">
    <source>
    </source>
</evidence>
<evidence type="ECO:0000303" key="3">
    <source>
    </source>
</evidence>
<evidence type="ECO:0000305" key="4"/>
<evidence type="ECO:0000305" key="5">
    <source>
    </source>
</evidence>
<dbReference type="EMBL" id="AP006878">
    <property type="protein sequence ID" value="BAD84660.1"/>
    <property type="molecule type" value="Genomic_DNA"/>
</dbReference>
<dbReference type="RefSeq" id="WP_011249426.1">
    <property type="nucleotide sequence ID" value="NC_006624.1"/>
</dbReference>
<dbReference type="SMR" id="Q5JD67"/>
<dbReference type="STRING" id="69014.TK0471"/>
<dbReference type="EnsemblBacteria" id="BAD84660">
    <property type="protein sequence ID" value="BAD84660"/>
    <property type="gene ID" value="TK0471"/>
</dbReference>
<dbReference type="GeneID" id="78446982"/>
<dbReference type="KEGG" id="tko:TK0471"/>
<dbReference type="PATRIC" id="fig|69014.16.peg.463"/>
<dbReference type="eggNOG" id="arCOG02037">
    <property type="taxonomic scope" value="Archaea"/>
</dbReference>
<dbReference type="HOGENOM" id="CLU_072493_0_2_2"/>
<dbReference type="InParanoid" id="Q5JD67"/>
<dbReference type="OrthoDB" id="30795at2157"/>
<dbReference type="PhylomeDB" id="Q5JD67"/>
<dbReference type="Proteomes" id="UP000000536">
    <property type="component" value="Chromosome"/>
</dbReference>
<dbReference type="GO" id="GO:0005694">
    <property type="term" value="C:chromosome"/>
    <property type="evidence" value="ECO:0007669"/>
    <property type="project" value="UniProtKB-SubCell"/>
</dbReference>
<dbReference type="GO" id="GO:0005737">
    <property type="term" value="C:cytoplasm"/>
    <property type="evidence" value="ECO:0007669"/>
    <property type="project" value="UniProtKB-SubCell"/>
</dbReference>
<dbReference type="GO" id="GO:0003677">
    <property type="term" value="F:DNA binding"/>
    <property type="evidence" value="ECO:0007669"/>
    <property type="project" value="UniProtKB-KW"/>
</dbReference>
<dbReference type="Gene3D" id="3.30.870.10">
    <property type="entry name" value="Endonuclease Chain A"/>
    <property type="match status" value="1"/>
</dbReference>
<dbReference type="Gene3D" id="1.10.10.10">
    <property type="entry name" value="Winged helix-like DNA-binding domain superfamily/Winged helix DNA-binding domain"/>
    <property type="match status" value="1"/>
</dbReference>
<dbReference type="InterPro" id="IPR053499">
    <property type="entry name" value="HTH-type_TrmB_regulator"/>
</dbReference>
<dbReference type="InterPro" id="IPR051797">
    <property type="entry name" value="TrmB-like"/>
</dbReference>
<dbReference type="InterPro" id="IPR021586">
    <property type="entry name" value="Tscrpt_reg_TrmB_C"/>
</dbReference>
<dbReference type="InterPro" id="IPR002831">
    <property type="entry name" value="Tscrpt_reg_TrmB_N"/>
</dbReference>
<dbReference type="InterPro" id="IPR036388">
    <property type="entry name" value="WH-like_DNA-bd_sf"/>
</dbReference>
<dbReference type="InterPro" id="IPR036390">
    <property type="entry name" value="WH_DNA-bd_sf"/>
</dbReference>
<dbReference type="NCBIfam" id="NF041141">
    <property type="entry name" value="tran_reg_TrmBL2"/>
    <property type="match status" value="1"/>
</dbReference>
<dbReference type="PANTHER" id="PTHR34293">
    <property type="entry name" value="HTH-TYPE TRANSCRIPTIONAL REGULATOR TRMBL2"/>
    <property type="match status" value="1"/>
</dbReference>
<dbReference type="PANTHER" id="PTHR34293:SF1">
    <property type="entry name" value="HTH-TYPE TRANSCRIPTIONAL REGULATOR TRMBL2"/>
    <property type="match status" value="1"/>
</dbReference>
<dbReference type="Pfam" id="PF11495">
    <property type="entry name" value="Regulator_TrmB"/>
    <property type="match status" value="1"/>
</dbReference>
<dbReference type="Pfam" id="PF01978">
    <property type="entry name" value="TrmB"/>
    <property type="match status" value="1"/>
</dbReference>
<dbReference type="SUPFAM" id="SSF46785">
    <property type="entry name" value="Winged helix' DNA-binding domain"/>
    <property type="match status" value="1"/>
</dbReference>
<feature type="chain" id="PRO_0000432649" description="DNA-binding HTH-type transcriptional repressor TrmBL2">
    <location>
        <begin position="1"/>
        <end position="264"/>
    </location>
</feature>
<feature type="coiled-coil region" evidence="1">
    <location>
        <begin position="81"/>
        <end position="113"/>
    </location>
</feature>
<protein>
    <recommendedName>
        <fullName evidence="3 4">DNA-binding HTH-type transcriptional repressor TrmBL2</fullName>
    </recommendedName>
</protein>
<proteinExistence type="evidence at protein level"/>
<gene>
    <name evidence="3" type="primary">trmBL2</name>
    <name type="ordered locus">TK0471</name>
</gene>
<reference key="1">
    <citation type="journal article" date="2005" name="Genome Res.">
        <title>Complete genome sequence of the hyperthermophilic archaeon Thermococcus kodakaraensis KOD1 and comparison with Pyrococcus genomes.</title>
        <authorList>
            <person name="Fukui T."/>
            <person name="Atomi H."/>
            <person name="Kanai T."/>
            <person name="Matsumi R."/>
            <person name="Fujiwara S."/>
            <person name="Imanaka T."/>
        </authorList>
    </citation>
    <scope>NUCLEOTIDE SEQUENCE [LARGE SCALE GENOMIC DNA]</scope>
    <source>
        <strain>ATCC BAA-918 / JCM 12380 / KOD1</strain>
    </source>
</reference>
<reference key="2">
    <citation type="journal article" date="2011" name="Mol. Biol. Cell">
        <title>Histone and TK0471/TrmBL2 form a novel heterogeneous genome architecture in the hyperthermophilic archaeon Thermococcus kodakarensis.</title>
        <authorList>
            <person name="Maruyama H."/>
            <person name="Shin M."/>
            <person name="Oda T."/>
            <person name="Matsumi R."/>
            <person name="Ohniwa R.L."/>
            <person name="Itoh T."/>
            <person name="Shirahige K."/>
            <person name="Imanaka T."/>
            <person name="Atomi H."/>
            <person name="Yoshimura S.H."/>
            <person name="Takeyasu K."/>
        </authorList>
    </citation>
    <scope>FUNCTION</scope>
    <scope>IDENTIFICATION BY MASS SPECTROMETRY</scope>
    <scope>SUBCELLULAR LOCATION</scope>
    <scope>DISRUPTION PHENOTYPE</scope>
    <scope>DNA-BINDING</scope>
    <source>
        <strain>ATCC BAA-918 / JCM 12380 / KOD1</strain>
    </source>
</reference>
<keyword id="KW-0158">Chromosome</keyword>
<keyword id="KW-0175">Coiled coil</keyword>
<keyword id="KW-0963">Cytoplasm</keyword>
<keyword id="KW-0238">DNA-binding</keyword>
<keyword id="KW-1185">Reference proteome</keyword>
<keyword id="KW-0678">Repressor</keyword>
<keyword id="KW-0804">Transcription</keyword>
<keyword id="KW-0805">Transcription regulation</keyword>
<comment type="function">
    <text evidence="2">An abundant chromosomal protein that seems to be involved in both genome architecture and transcription repression. Incubation with DNA in vitro gives fibrous structures 14.2 +/- 2.1 nm in thickness (naked DNA is 1.83 +/- 0.37 nm); does not significantly compact DNA (PubMed:21148291). Binds to both coding and non-coding regions; binding within gene promoters correlates with decreased transcript levels, while binding within coding regions does not (PubMed:21148291).</text>
</comment>
<comment type="subcellular location">
    <subcellularLocation>
        <location evidence="5">Cytoplasm</location>
    </subcellularLocation>
    <subcellularLocation>
        <location evidence="2">Chromosome</location>
    </subcellularLocation>
</comment>
<comment type="disruption phenotype">
    <text evidence="2">Slight growth delay compared to wild-type. No fibrous chromosomal DNA isolated from cells, DNA condensation is normal. Chromatin DNA is more sensitive to micrococcal nuclease. Alters gene expression levels of about 10% of the genome.</text>
</comment>
<comment type="similarity">
    <text evidence="4">Belongs to the transcriptional regulator TrmB family.</text>
</comment>
<accession>Q5JD67</accession>
<name>TMBL2_THEKO</name>
<sequence length="264" mass="30826">MVKDRMVELLQEHFELNLYEARAYVALVGFGVLTPAELASVSEVPAPRTYDVLRSLEKKGFAISQPGKVNKYRPVHPENILEKFIEEWQERVKEELEAKKKAKEELIELMKPLIETEIPKYGVERVWVVRGIRNATLKTKEMFEEVKEKILLADDGYIAINLENDLIKAIDNGAKAKIIVSKSLLKRLEGSKIMEYAKKGKLELRALDKFELPMLICDDEVFFALEDMAARYFNYETQVWIKDFRVRDLFEAKFNEYWEKAEKV</sequence>
<organism>
    <name type="scientific">Thermococcus kodakarensis (strain ATCC BAA-918 / JCM 12380 / KOD1)</name>
    <name type="common">Pyrococcus kodakaraensis (strain KOD1)</name>
    <dbReference type="NCBI Taxonomy" id="69014"/>
    <lineage>
        <taxon>Archaea</taxon>
        <taxon>Methanobacteriati</taxon>
        <taxon>Methanobacteriota</taxon>
        <taxon>Thermococci</taxon>
        <taxon>Thermococcales</taxon>
        <taxon>Thermococcaceae</taxon>
        <taxon>Thermococcus</taxon>
    </lineage>
</organism>